<name>LON_CHLPN</name>
<accession>Q9Z9F4</accession>
<accession>Q9JQ69</accession>
<keyword id="KW-0067">ATP-binding</keyword>
<keyword id="KW-0963">Cytoplasm</keyword>
<keyword id="KW-0378">Hydrolase</keyword>
<keyword id="KW-0547">Nucleotide-binding</keyword>
<keyword id="KW-0645">Protease</keyword>
<keyword id="KW-0720">Serine protease</keyword>
<keyword id="KW-0346">Stress response</keyword>
<gene>
    <name evidence="1" type="primary">lon</name>
    <name type="ordered locus">CPn_0027</name>
    <name type="ordered locus">CP_0749</name>
    <name type="ordered locus">CpB0031</name>
</gene>
<sequence length="819" mass="92276">MDSTTNSDSPILDPNPEDVEKLLDESEEESEDQSTERLLPSELFILPLNKRPFFPGMAAPILIESGPYYEVLKVLAKSSQKYIGLVLTKKENADILKVSFNQLHKTGVAARILRIMPIEGGSAQVLLSIEERIRIIEPIKDKYLKARVSYHADNKELTEELKAYSISIVSVIKDLLKLNPLFKEELQIFLGHSDFTEPGKLADFSVALTTATREELQEVLETTNMHDRIDKALILLKKELDLSRLQSSINQKIEATITKSQKEFFLKEQLKTIKKELGLEKEDRAIDIEKFSERLRKRHVPDYAMEVIQDEIEKLQTLETSSAEYTVCRNYLDWLTIIPWGIQSKEYHDLKKAEIVLNKDHYGLDEIKQRILELISVGKLSKGLKGSIICLVGPPGVGKTSIGRSIAKVLHRKFFRFSVGGMRDEAEIKGHRRTYIGAMPGKMVQALKQSQAMNPVIMIDEVDKIGASYHGDPASALLEVLDPEQNKDFLDHYLDVRVDLSNVLFILTANVLDTIPDPLLDRMEILRLSGYILEEKLQIAKKYLVPKARKEIGLTASEVNFQPEALKYMINNYAREAGVRTLNGNIKKVLRKVALKIVQNQEKPKSKKITFKISSKNLQTYLGKPIFSSDRFYESTPVGVATGLAWTSLGGATLYIESVQVSSLKTDMHLTGQAGEVMKESSQIAWTYLHSALHRYAPGYTFFPKSQVHIHIPEGATPKDGPSAGITMVTSLLSLLLETPVVNNLGMTGEITLTGRVLGVGGIREKLIAARRSRLNILIFPEDNRRDYEELPAYLKTGLKIHFVSHYDDVLKVAFPKLK</sequence>
<dbReference type="EC" id="3.4.21.53" evidence="1"/>
<dbReference type="EMBL" id="AE001363">
    <property type="protein sequence ID" value="AAD18180.1"/>
    <property type="molecule type" value="Genomic_DNA"/>
</dbReference>
<dbReference type="EMBL" id="AE002161">
    <property type="protein sequence ID" value="AAF38554.1"/>
    <property type="molecule type" value="Genomic_DNA"/>
</dbReference>
<dbReference type="EMBL" id="BA000008">
    <property type="protein sequence ID" value="BAA98239.1"/>
    <property type="molecule type" value="Genomic_DNA"/>
</dbReference>
<dbReference type="EMBL" id="AE009440">
    <property type="protein sequence ID" value="AAP97964.1"/>
    <property type="molecule type" value="Genomic_DNA"/>
</dbReference>
<dbReference type="PIR" id="B72128">
    <property type="entry name" value="B72128"/>
</dbReference>
<dbReference type="PIR" id="E86494">
    <property type="entry name" value="E86494"/>
</dbReference>
<dbReference type="RefSeq" id="NP_224235.1">
    <property type="nucleotide sequence ID" value="NC_000922.1"/>
</dbReference>
<dbReference type="RefSeq" id="WP_010882677.1">
    <property type="nucleotide sequence ID" value="NZ_LN847257.1"/>
</dbReference>
<dbReference type="SMR" id="Q9Z9F4"/>
<dbReference type="STRING" id="406984.CPK_ORF00528"/>
<dbReference type="GeneID" id="45050074"/>
<dbReference type="KEGG" id="cpa:CP_0749"/>
<dbReference type="KEGG" id="cpj:lon"/>
<dbReference type="KEGG" id="cpn:CPn_0027"/>
<dbReference type="KEGG" id="cpt:CpB0031"/>
<dbReference type="PATRIC" id="fig|115713.3.peg.34"/>
<dbReference type="eggNOG" id="COG0466">
    <property type="taxonomic scope" value="Bacteria"/>
</dbReference>
<dbReference type="HOGENOM" id="CLU_004109_2_0_0"/>
<dbReference type="OMA" id="EYFLHQQ"/>
<dbReference type="OrthoDB" id="9803599at2"/>
<dbReference type="Proteomes" id="UP000000583">
    <property type="component" value="Chromosome"/>
</dbReference>
<dbReference type="Proteomes" id="UP000000801">
    <property type="component" value="Chromosome"/>
</dbReference>
<dbReference type="GO" id="GO:0005737">
    <property type="term" value="C:cytoplasm"/>
    <property type="evidence" value="ECO:0007669"/>
    <property type="project" value="UniProtKB-SubCell"/>
</dbReference>
<dbReference type="GO" id="GO:0005524">
    <property type="term" value="F:ATP binding"/>
    <property type="evidence" value="ECO:0007669"/>
    <property type="project" value="UniProtKB-UniRule"/>
</dbReference>
<dbReference type="GO" id="GO:0016887">
    <property type="term" value="F:ATP hydrolysis activity"/>
    <property type="evidence" value="ECO:0007669"/>
    <property type="project" value="UniProtKB-UniRule"/>
</dbReference>
<dbReference type="GO" id="GO:0004176">
    <property type="term" value="F:ATP-dependent peptidase activity"/>
    <property type="evidence" value="ECO:0007669"/>
    <property type="project" value="UniProtKB-UniRule"/>
</dbReference>
<dbReference type="GO" id="GO:0043565">
    <property type="term" value="F:sequence-specific DNA binding"/>
    <property type="evidence" value="ECO:0007669"/>
    <property type="project" value="UniProtKB-UniRule"/>
</dbReference>
<dbReference type="GO" id="GO:0004252">
    <property type="term" value="F:serine-type endopeptidase activity"/>
    <property type="evidence" value="ECO:0007669"/>
    <property type="project" value="UniProtKB-UniRule"/>
</dbReference>
<dbReference type="GO" id="GO:0034605">
    <property type="term" value="P:cellular response to heat"/>
    <property type="evidence" value="ECO:0007669"/>
    <property type="project" value="UniProtKB-UniRule"/>
</dbReference>
<dbReference type="GO" id="GO:0006515">
    <property type="term" value="P:protein quality control for misfolded or incompletely synthesized proteins"/>
    <property type="evidence" value="ECO:0007669"/>
    <property type="project" value="UniProtKB-UniRule"/>
</dbReference>
<dbReference type="CDD" id="cd19500">
    <property type="entry name" value="RecA-like_Lon"/>
    <property type="match status" value="1"/>
</dbReference>
<dbReference type="FunFam" id="3.40.50.300:FF:000021">
    <property type="entry name" value="Lon protease homolog"/>
    <property type="match status" value="1"/>
</dbReference>
<dbReference type="FunFam" id="1.20.5.5270:FF:000001">
    <property type="entry name" value="Lon protease homolog, mitochondrial"/>
    <property type="match status" value="1"/>
</dbReference>
<dbReference type="FunFam" id="1.20.58.1480:FF:000002">
    <property type="entry name" value="Lon protease homolog, mitochondrial"/>
    <property type="match status" value="1"/>
</dbReference>
<dbReference type="FunFam" id="3.30.230.10:FF:000015">
    <property type="entry name" value="Lon protease homolog, mitochondrial"/>
    <property type="match status" value="1"/>
</dbReference>
<dbReference type="Gene3D" id="1.10.8.60">
    <property type="match status" value="1"/>
</dbReference>
<dbReference type="Gene3D" id="1.20.5.5270">
    <property type="match status" value="1"/>
</dbReference>
<dbReference type="Gene3D" id="1.20.58.1480">
    <property type="match status" value="1"/>
</dbReference>
<dbReference type="Gene3D" id="3.30.230.10">
    <property type="match status" value="1"/>
</dbReference>
<dbReference type="Gene3D" id="2.30.130.40">
    <property type="entry name" value="LON domain-like"/>
    <property type="match status" value="1"/>
</dbReference>
<dbReference type="Gene3D" id="3.40.50.300">
    <property type="entry name" value="P-loop containing nucleotide triphosphate hydrolases"/>
    <property type="match status" value="1"/>
</dbReference>
<dbReference type="HAMAP" id="MF_01973">
    <property type="entry name" value="lon_bact"/>
    <property type="match status" value="1"/>
</dbReference>
<dbReference type="InterPro" id="IPR003593">
    <property type="entry name" value="AAA+_ATPase"/>
</dbReference>
<dbReference type="InterPro" id="IPR003959">
    <property type="entry name" value="ATPase_AAA_core"/>
</dbReference>
<dbReference type="InterPro" id="IPR027543">
    <property type="entry name" value="Lon_bac"/>
</dbReference>
<dbReference type="InterPro" id="IPR004815">
    <property type="entry name" value="Lon_bac/euk-typ"/>
</dbReference>
<dbReference type="InterPro" id="IPR054594">
    <property type="entry name" value="Lon_lid"/>
</dbReference>
<dbReference type="InterPro" id="IPR008269">
    <property type="entry name" value="Lon_proteolytic"/>
</dbReference>
<dbReference type="InterPro" id="IPR027065">
    <property type="entry name" value="Lon_Prtase"/>
</dbReference>
<dbReference type="InterPro" id="IPR003111">
    <property type="entry name" value="Lon_prtase_N"/>
</dbReference>
<dbReference type="InterPro" id="IPR046336">
    <property type="entry name" value="Lon_prtase_N_sf"/>
</dbReference>
<dbReference type="InterPro" id="IPR027417">
    <property type="entry name" value="P-loop_NTPase"/>
</dbReference>
<dbReference type="InterPro" id="IPR008268">
    <property type="entry name" value="Peptidase_S16_AS"/>
</dbReference>
<dbReference type="InterPro" id="IPR015947">
    <property type="entry name" value="PUA-like_sf"/>
</dbReference>
<dbReference type="InterPro" id="IPR020568">
    <property type="entry name" value="Ribosomal_Su5_D2-typ_SF"/>
</dbReference>
<dbReference type="InterPro" id="IPR014721">
    <property type="entry name" value="Ribsml_uS5_D2-typ_fold_subgr"/>
</dbReference>
<dbReference type="NCBIfam" id="TIGR00763">
    <property type="entry name" value="lon"/>
    <property type="match status" value="1"/>
</dbReference>
<dbReference type="PANTHER" id="PTHR43718">
    <property type="entry name" value="LON PROTEASE"/>
    <property type="match status" value="1"/>
</dbReference>
<dbReference type="PANTHER" id="PTHR43718:SF2">
    <property type="entry name" value="LON PROTEASE HOMOLOG, MITOCHONDRIAL"/>
    <property type="match status" value="1"/>
</dbReference>
<dbReference type="Pfam" id="PF00004">
    <property type="entry name" value="AAA"/>
    <property type="match status" value="1"/>
</dbReference>
<dbReference type="Pfam" id="PF05362">
    <property type="entry name" value="Lon_C"/>
    <property type="match status" value="1"/>
</dbReference>
<dbReference type="Pfam" id="PF22667">
    <property type="entry name" value="Lon_lid"/>
    <property type="match status" value="1"/>
</dbReference>
<dbReference type="Pfam" id="PF02190">
    <property type="entry name" value="LON_substr_bdg"/>
    <property type="match status" value="1"/>
</dbReference>
<dbReference type="PIRSF" id="PIRSF001174">
    <property type="entry name" value="Lon_proteas"/>
    <property type="match status" value="1"/>
</dbReference>
<dbReference type="PRINTS" id="PR00830">
    <property type="entry name" value="ENDOLAPTASE"/>
</dbReference>
<dbReference type="SMART" id="SM00382">
    <property type="entry name" value="AAA"/>
    <property type="match status" value="1"/>
</dbReference>
<dbReference type="SMART" id="SM00464">
    <property type="entry name" value="LON"/>
    <property type="match status" value="1"/>
</dbReference>
<dbReference type="SUPFAM" id="SSF52540">
    <property type="entry name" value="P-loop containing nucleoside triphosphate hydrolases"/>
    <property type="match status" value="1"/>
</dbReference>
<dbReference type="SUPFAM" id="SSF88697">
    <property type="entry name" value="PUA domain-like"/>
    <property type="match status" value="1"/>
</dbReference>
<dbReference type="SUPFAM" id="SSF54211">
    <property type="entry name" value="Ribosomal protein S5 domain 2-like"/>
    <property type="match status" value="1"/>
</dbReference>
<dbReference type="PROSITE" id="PS51787">
    <property type="entry name" value="LON_N"/>
    <property type="match status" value="1"/>
</dbReference>
<dbReference type="PROSITE" id="PS51786">
    <property type="entry name" value="LON_PROTEOLYTIC"/>
    <property type="match status" value="1"/>
</dbReference>
<dbReference type="PROSITE" id="PS01046">
    <property type="entry name" value="LON_SER"/>
    <property type="match status" value="1"/>
</dbReference>
<feature type="chain" id="PRO_0000076131" description="Lon protease">
    <location>
        <begin position="1"/>
        <end position="819"/>
    </location>
</feature>
<feature type="domain" description="Lon N-terminal" evidence="3">
    <location>
        <begin position="43"/>
        <end position="240"/>
    </location>
</feature>
<feature type="domain" description="Lon proteolytic" evidence="2">
    <location>
        <begin position="635"/>
        <end position="817"/>
    </location>
</feature>
<feature type="region of interest" description="Disordered" evidence="4">
    <location>
        <begin position="1"/>
        <end position="36"/>
    </location>
</feature>
<feature type="active site" evidence="1">
    <location>
        <position position="723"/>
    </location>
</feature>
<feature type="active site" evidence="1">
    <location>
        <position position="766"/>
    </location>
</feature>
<feature type="binding site" evidence="1">
    <location>
        <begin position="393"/>
        <end position="400"/>
    </location>
    <ligand>
        <name>ATP</name>
        <dbReference type="ChEBI" id="CHEBI:30616"/>
    </ligand>
</feature>
<proteinExistence type="inferred from homology"/>
<organism>
    <name type="scientific">Chlamydia pneumoniae</name>
    <name type="common">Chlamydophila pneumoniae</name>
    <dbReference type="NCBI Taxonomy" id="83558"/>
    <lineage>
        <taxon>Bacteria</taxon>
        <taxon>Pseudomonadati</taxon>
        <taxon>Chlamydiota</taxon>
        <taxon>Chlamydiia</taxon>
        <taxon>Chlamydiales</taxon>
        <taxon>Chlamydiaceae</taxon>
        <taxon>Chlamydia/Chlamydophila group</taxon>
        <taxon>Chlamydia</taxon>
    </lineage>
</organism>
<comment type="function">
    <text evidence="1">ATP-dependent serine protease that mediates the selective degradation of mutant and abnormal proteins as well as certain short-lived regulatory proteins. Required for cellular homeostasis and for survival from DNA damage and developmental changes induced by stress. Degrades polypeptides processively to yield small peptide fragments that are 5 to 10 amino acids long. Binds to DNA in a double-stranded, site-specific manner.</text>
</comment>
<comment type="catalytic activity">
    <reaction evidence="1">
        <text>Hydrolysis of proteins in presence of ATP.</text>
        <dbReference type="EC" id="3.4.21.53"/>
    </reaction>
</comment>
<comment type="subunit">
    <text evidence="1">Homohexamer. Organized in a ring with a central cavity.</text>
</comment>
<comment type="subcellular location">
    <subcellularLocation>
        <location evidence="1">Cytoplasm</location>
    </subcellularLocation>
</comment>
<comment type="induction">
    <text evidence="1">By heat shock.</text>
</comment>
<comment type="similarity">
    <text evidence="1">Belongs to the peptidase S16 family.</text>
</comment>
<protein>
    <recommendedName>
        <fullName evidence="1">Lon protease</fullName>
        <ecNumber evidence="1">3.4.21.53</ecNumber>
    </recommendedName>
    <alternativeName>
        <fullName evidence="1">ATP-dependent protease La</fullName>
    </alternativeName>
</protein>
<evidence type="ECO:0000255" key="1">
    <source>
        <dbReference type="HAMAP-Rule" id="MF_01973"/>
    </source>
</evidence>
<evidence type="ECO:0000255" key="2">
    <source>
        <dbReference type="PROSITE-ProRule" id="PRU01122"/>
    </source>
</evidence>
<evidence type="ECO:0000255" key="3">
    <source>
        <dbReference type="PROSITE-ProRule" id="PRU01123"/>
    </source>
</evidence>
<evidence type="ECO:0000256" key="4">
    <source>
        <dbReference type="SAM" id="MobiDB-lite"/>
    </source>
</evidence>
<reference key="1">
    <citation type="journal article" date="1999" name="Nat. Genet.">
        <title>Comparative genomes of Chlamydia pneumoniae and C. trachomatis.</title>
        <authorList>
            <person name="Kalman S."/>
            <person name="Mitchell W.P."/>
            <person name="Marathe R."/>
            <person name="Lammel C.J."/>
            <person name="Fan J."/>
            <person name="Hyman R.W."/>
            <person name="Olinger L."/>
            <person name="Grimwood J."/>
            <person name="Davis R.W."/>
            <person name="Stephens R.S."/>
        </authorList>
    </citation>
    <scope>NUCLEOTIDE SEQUENCE [LARGE SCALE GENOMIC DNA]</scope>
    <source>
        <strain>CWL029</strain>
    </source>
</reference>
<reference key="2">
    <citation type="journal article" date="2000" name="Nucleic Acids Res.">
        <title>Genome sequences of Chlamydia trachomatis MoPn and Chlamydia pneumoniae AR39.</title>
        <authorList>
            <person name="Read T.D."/>
            <person name="Brunham R.C."/>
            <person name="Shen C."/>
            <person name="Gill S.R."/>
            <person name="Heidelberg J.F."/>
            <person name="White O."/>
            <person name="Hickey E.K."/>
            <person name="Peterson J.D."/>
            <person name="Utterback T.R."/>
            <person name="Berry K.J."/>
            <person name="Bass S."/>
            <person name="Linher K.D."/>
            <person name="Weidman J.F."/>
            <person name="Khouri H.M."/>
            <person name="Craven B."/>
            <person name="Bowman C."/>
            <person name="Dodson R.J."/>
            <person name="Gwinn M.L."/>
            <person name="Nelson W.C."/>
            <person name="DeBoy R.T."/>
            <person name="Kolonay J.F."/>
            <person name="McClarty G."/>
            <person name="Salzberg S.L."/>
            <person name="Eisen J.A."/>
            <person name="Fraser C.M."/>
        </authorList>
    </citation>
    <scope>NUCLEOTIDE SEQUENCE [LARGE SCALE GENOMIC DNA]</scope>
    <source>
        <strain>AR39</strain>
    </source>
</reference>
<reference key="3">
    <citation type="journal article" date="2000" name="Nucleic Acids Res.">
        <title>Comparison of whole genome sequences of Chlamydia pneumoniae J138 from Japan and CWL029 from USA.</title>
        <authorList>
            <person name="Shirai M."/>
            <person name="Hirakawa H."/>
            <person name="Kimoto M."/>
            <person name="Tabuchi M."/>
            <person name="Kishi F."/>
            <person name="Ouchi K."/>
            <person name="Shiba T."/>
            <person name="Ishii K."/>
            <person name="Hattori M."/>
            <person name="Kuhara S."/>
            <person name="Nakazawa T."/>
        </authorList>
    </citation>
    <scope>NUCLEOTIDE SEQUENCE [LARGE SCALE GENOMIC DNA]</scope>
    <source>
        <strain>J138</strain>
    </source>
</reference>
<reference key="4">
    <citation type="submission" date="2002-05" db="EMBL/GenBank/DDBJ databases">
        <title>The genome sequence of Chlamydia pneumoniae TW183 and comparison with other Chlamydia strains based on whole genome sequence analysis.</title>
        <authorList>
            <person name="Geng M.M."/>
            <person name="Schuhmacher A."/>
            <person name="Muehldorfer I."/>
            <person name="Bensch K.W."/>
            <person name="Schaefer K.P."/>
            <person name="Schneider S."/>
            <person name="Pohl T."/>
            <person name="Essig A."/>
            <person name="Marre R."/>
            <person name="Melchers K."/>
        </authorList>
    </citation>
    <scope>NUCLEOTIDE SEQUENCE [LARGE SCALE GENOMIC DNA]</scope>
    <source>
        <strain>TW-183</strain>
    </source>
</reference>